<sequence length="331" mass="37126">MQNSTLIDSFGRQVTYVRLSVTDRCDFRCIYCMAEDMTFLPRKDVLSLEEFALLGRAFAELGVTKIRVSGGEPLIRKDVIQLFESLGAINSINDLCLTSNGSKLTELAKPLVDAGVHRINVSLDTLNEQRFKELTRFGDLNTVLKGIDAALNAGFKKIKLNSVVMKNYNLQEAADLATYALERGMDISFIEEMPLGEIHSHSRDVEFISSDELRNQLSNSFELTATNEHTGGPSRYWKARDYNAKIGFISPHSHNFCDTCNRVRVTASGRLLLCLGNEHSVDLRAILRAHPGEIEPIKEALINAMAIKPEKHEFNLEEEPQILRFMNMTGG</sequence>
<name>MOAA_SACD2</name>
<reference key="1">
    <citation type="journal article" date="2008" name="PLoS Genet.">
        <title>Complete genome sequence of the complex carbohydrate-degrading marine bacterium, Saccharophagus degradans strain 2-40 T.</title>
        <authorList>
            <person name="Weiner R.M."/>
            <person name="Taylor L.E. II"/>
            <person name="Henrissat B."/>
            <person name="Hauser L."/>
            <person name="Land M."/>
            <person name="Coutinho P.M."/>
            <person name="Rancurel C."/>
            <person name="Saunders E.H."/>
            <person name="Longmire A.G."/>
            <person name="Zhang H."/>
            <person name="Bayer E.A."/>
            <person name="Gilbert H.J."/>
            <person name="Larimer F."/>
            <person name="Zhulin I.B."/>
            <person name="Ekborg N.A."/>
            <person name="Lamed R."/>
            <person name="Richardson P.M."/>
            <person name="Borovok I."/>
            <person name="Hutcheson S."/>
        </authorList>
    </citation>
    <scope>NUCLEOTIDE SEQUENCE [LARGE SCALE GENOMIC DNA]</scope>
    <source>
        <strain>2-40 / ATCC 43961 / DSM 17024</strain>
    </source>
</reference>
<proteinExistence type="inferred from homology"/>
<comment type="function">
    <text evidence="1">Catalyzes the cyclization of GTP to (8S)-3',8-cyclo-7,8-dihydroguanosine 5'-triphosphate.</text>
</comment>
<comment type="catalytic activity">
    <reaction evidence="1">
        <text>GTP + AH2 + S-adenosyl-L-methionine = (8S)-3',8-cyclo-7,8-dihydroguanosine 5'-triphosphate + 5'-deoxyadenosine + L-methionine + A + H(+)</text>
        <dbReference type="Rhea" id="RHEA:49576"/>
        <dbReference type="ChEBI" id="CHEBI:13193"/>
        <dbReference type="ChEBI" id="CHEBI:15378"/>
        <dbReference type="ChEBI" id="CHEBI:17319"/>
        <dbReference type="ChEBI" id="CHEBI:17499"/>
        <dbReference type="ChEBI" id="CHEBI:37565"/>
        <dbReference type="ChEBI" id="CHEBI:57844"/>
        <dbReference type="ChEBI" id="CHEBI:59789"/>
        <dbReference type="ChEBI" id="CHEBI:131766"/>
        <dbReference type="EC" id="4.1.99.22"/>
    </reaction>
</comment>
<comment type="cofactor">
    <cofactor evidence="1">
        <name>[4Fe-4S] cluster</name>
        <dbReference type="ChEBI" id="CHEBI:49883"/>
    </cofactor>
    <text evidence="1">Binds 2 [4Fe-4S] clusters. Binds 1 [4Fe-4S] cluster coordinated with 3 cysteines and an exchangeable S-adenosyl-L-methionine and 1 [4Fe-4S] cluster coordinated with 3 cysteines and the GTP-derived substrate.</text>
</comment>
<comment type="pathway">
    <text evidence="1">Cofactor biosynthesis; molybdopterin biosynthesis.</text>
</comment>
<comment type="subunit">
    <text evidence="1">Monomer and homodimer.</text>
</comment>
<comment type="similarity">
    <text evidence="1">Belongs to the radical SAM superfamily. MoaA family.</text>
</comment>
<protein>
    <recommendedName>
        <fullName evidence="1">GTP 3',8-cyclase</fullName>
        <ecNumber evidence="1">4.1.99.22</ecNumber>
    </recommendedName>
    <alternativeName>
        <fullName evidence="1">Molybdenum cofactor biosynthesis protein A</fullName>
    </alternativeName>
</protein>
<organism>
    <name type="scientific">Saccharophagus degradans (strain 2-40 / ATCC 43961 / DSM 17024)</name>
    <dbReference type="NCBI Taxonomy" id="203122"/>
    <lineage>
        <taxon>Bacteria</taxon>
        <taxon>Pseudomonadati</taxon>
        <taxon>Pseudomonadota</taxon>
        <taxon>Gammaproteobacteria</taxon>
        <taxon>Cellvibrionales</taxon>
        <taxon>Cellvibrionaceae</taxon>
        <taxon>Saccharophagus</taxon>
    </lineage>
</organism>
<keyword id="KW-0004">4Fe-4S</keyword>
<keyword id="KW-0342">GTP-binding</keyword>
<keyword id="KW-0408">Iron</keyword>
<keyword id="KW-0411">Iron-sulfur</keyword>
<keyword id="KW-0456">Lyase</keyword>
<keyword id="KW-0479">Metal-binding</keyword>
<keyword id="KW-0501">Molybdenum cofactor biosynthesis</keyword>
<keyword id="KW-0547">Nucleotide-binding</keyword>
<keyword id="KW-1185">Reference proteome</keyword>
<keyword id="KW-0949">S-adenosyl-L-methionine</keyword>
<evidence type="ECO:0000255" key="1">
    <source>
        <dbReference type="HAMAP-Rule" id="MF_01225"/>
    </source>
</evidence>
<evidence type="ECO:0000255" key="2">
    <source>
        <dbReference type="PROSITE-ProRule" id="PRU01266"/>
    </source>
</evidence>
<feature type="chain" id="PRO_1000054221" description="GTP 3',8-cyclase">
    <location>
        <begin position="1"/>
        <end position="331"/>
    </location>
</feature>
<feature type="domain" description="Radical SAM core" evidence="2">
    <location>
        <begin position="9"/>
        <end position="233"/>
    </location>
</feature>
<feature type="binding site" evidence="1">
    <location>
        <position position="18"/>
    </location>
    <ligand>
        <name>GTP</name>
        <dbReference type="ChEBI" id="CHEBI:37565"/>
    </ligand>
</feature>
<feature type="binding site" evidence="1">
    <location>
        <position position="25"/>
    </location>
    <ligand>
        <name>[4Fe-4S] cluster</name>
        <dbReference type="ChEBI" id="CHEBI:49883"/>
        <label>1</label>
        <note>4Fe-4S-S-AdoMet</note>
    </ligand>
</feature>
<feature type="binding site" evidence="1">
    <location>
        <position position="29"/>
    </location>
    <ligand>
        <name>[4Fe-4S] cluster</name>
        <dbReference type="ChEBI" id="CHEBI:49883"/>
        <label>1</label>
        <note>4Fe-4S-S-AdoMet</note>
    </ligand>
</feature>
<feature type="binding site" evidence="1">
    <location>
        <position position="31"/>
    </location>
    <ligand>
        <name>S-adenosyl-L-methionine</name>
        <dbReference type="ChEBI" id="CHEBI:59789"/>
    </ligand>
</feature>
<feature type="binding site" evidence="1">
    <location>
        <position position="32"/>
    </location>
    <ligand>
        <name>[4Fe-4S] cluster</name>
        <dbReference type="ChEBI" id="CHEBI:49883"/>
        <label>1</label>
        <note>4Fe-4S-S-AdoMet</note>
    </ligand>
</feature>
<feature type="binding site" evidence="1">
    <location>
        <position position="67"/>
    </location>
    <ligand>
        <name>GTP</name>
        <dbReference type="ChEBI" id="CHEBI:37565"/>
    </ligand>
</feature>
<feature type="binding site" evidence="1">
    <location>
        <position position="71"/>
    </location>
    <ligand>
        <name>S-adenosyl-L-methionine</name>
        <dbReference type="ChEBI" id="CHEBI:59789"/>
    </ligand>
</feature>
<feature type="binding site" evidence="1">
    <location>
        <position position="98"/>
    </location>
    <ligand>
        <name>GTP</name>
        <dbReference type="ChEBI" id="CHEBI:37565"/>
    </ligand>
</feature>
<feature type="binding site" evidence="1">
    <location>
        <position position="122"/>
    </location>
    <ligand>
        <name>S-adenosyl-L-methionine</name>
        <dbReference type="ChEBI" id="CHEBI:59789"/>
    </ligand>
</feature>
<feature type="binding site" evidence="1">
    <location>
        <position position="159"/>
    </location>
    <ligand>
        <name>GTP</name>
        <dbReference type="ChEBI" id="CHEBI:37565"/>
    </ligand>
</feature>
<feature type="binding site" evidence="1">
    <location>
        <position position="193"/>
    </location>
    <ligand>
        <name>S-adenosyl-L-methionine</name>
        <dbReference type="ChEBI" id="CHEBI:59789"/>
    </ligand>
</feature>
<feature type="binding site" evidence="1">
    <location>
        <position position="257"/>
    </location>
    <ligand>
        <name>[4Fe-4S] cluster</name>
        <dbReference type="ChEBI" id="CHEBI:49883"/>
        <label>2</label>
        <note>4Fe-4S-substrate</note>
    </ligand>
</feature>
<feature type="binding site" evidence="1">
    <location>
        <position position="260"/>
    </location>
    <ligand>
        <name>[4Fe-4S] cluster</name>
        <dbReference type="ChEBI" id="CHEBI:49883"/>
        <label>2</label>
        <note>4Fe-4S-substrate</note>
    </ligand>
</feature>
<feature type="binding site" evidence="1">
    <location>
        <begin position="262"/>
        <end position="264"/>
    </location>
    <ligand>
        <name>GTP</name>
        <dbReference type="ChEBI" id="CHEBI:37565"/>
    </ligand>
</feature>
<feature type="binding site" evidence="1">
    <location>
        <position position="274"/>
    </location>
    <ligand>
        <name>[4Fe-4S] cluster</name>
        <dbReference type="ChEBI" id="CHEBI:49883"/>
        <label>2</label>
        <note>4Fe-4S-substrate</note>
    </ligand>
</feature>
<accession>Q21I62</accession>
<gene>
    <name evidence="1" type="primary">moaA</name>
    <name type="ordered locus">Sde_2357</name>
</gene>
<dbReference type="EC" id="4.1.99.22" evidence="1"/>
<dbReference type="EMBL" id="CP000282">
    <property type="protein sequence ID" value="ABD81617.1"/>
    <property type="molecule type" value="Genomic_DNA"/>
</dbReference>
<dbReference type="RefSeq" id="WP_011468834.1">
    <property type="nucleotide sequence ID" value="NC_007912.1"/>
</dbReference>
<dbReference type="SMR" id="Q21I62"/>
<dbReference type="STRING" id="203122.Sde_2357"/>
<dbReference type="GeneID" id="98614021"/>
<dbReference type="KEGG" id="sde:Sde_2357"/>
<dbReference type="eggNOG" id="COG2896">
    <property type="taxonomic scope" value="Bacteria"/>
</dbReference>
<dbReference type="HOGENOM" id="CLU_009273_0_1_6"/>
<dbReference type="OrthoDB" id="9763993at2"/>
<dbReference type="UniPathway" id="UPA00344"/>
<dbReference type="Proteomes" id="UP000001947">
    <property type="component" value="Chromosome"/>
</dbReference>
<dbReference type="GO" id="GO:0051539">
    <property type="term" value="F:4 iron, 4 sulfur cluster binding"/>
    <property type="evidence" value="ECO:0007669"/>
    <property type="project" value="UniProtKB-UniRule"/>
</dbReference>
<dbReference type="GO" id="GO:0061799">
    <property type="term" value="F:cyclic pyranopterin monophosphate synthase activity"/>
    <property type="evidence" value="ECO:0007669"/>
    <property type="project" value="TreeGrafter"/>
</dbReference>
<dbReference type="GO" id="GO:0061798">
    <property type="term" value="F:GTP 3',8'-cyclase activity"/>
    <property type="evidence" value="ECO:0007669"/>
    <property type="project" value="UniProtKB-UniRule"/>
</dbReference>
<dbReference type="GO" id="GO:0005525">
    <property type="term" value="F:GTP binding"/>
    <property type="evidence" value="ECO:0007669"/>
    <property type="project" value="UniProtKB-UniRule"/>
</dbReference>
<dbReference type="GO" id="GO:0046872">
    <property type="term" value="F:metal ion binding"/>
    <property type="evidence" value="ECO:0007669"/>
    <property type="project" value="UniProtKB-KW"/>
</dbReference>
<dbReference type="GO" id="GO:1904047">
    <property type="term" value="F:S-adenosyl-L-methionine binding"/>
    <property type="evidence" value="ECO:0007669"/>
    <property type="project" value="UniProtKB-UniRule"/>
</dbReference>
<dbReference type="GO" id="GO:0006777">
    <property type="term" value="P:Mo-molybdopterin cofactor biosynthetic process"/>
    <property type="evidence" value="ECO:0007669"/>
    <property type="project" value="UniProtKB-UniRule"/>
</dbReference>
<dbReference type="CDD" id="cd01335">
    <property type="entry name" value="Radical_SAM"/>
    <property type="match status" value="1"/>
</dbReference>
<dbReference type="CDD" id="cd21117">
    <property type="entry name" value="Twitch_MoaA"/>
    <property type="match status" value="1"/>
</dbReference>
<dbReference type="Gene3D" id="3.20.20.70">
    <property type="entry name" value="Aldolase class I"/>
    <property type="match status" value="1"/>
</dbReference>
<dbReference type="HAMAP" id="MF_01225_B">
    <property type="entry name" value="MoaA_B"/>
    <property type="match status" value="1"/>
</dbReference>
<dbReference type="InterPro" id="IPR013785">
    <property type="entry name" value="Aldolase_TIM"/>
</dbReference>
<dbReference type="InterPro" id="IPR006638">
    <property type="entry name" value="Elp3/MiaA/NifB-like_rSAM"/>
</dbReference>
<dbReference type="InterPro" id="IPR013483">
    <property type="entry name" value="MoaA"/>
</dbReference>
<dbReference type="InterPro" id="IPR000385">
    <property type="entry name" value="MoaA_NifB_PqqE_Fe-S-bd_CS"/>
</dbReference>
<dbReference type="InterPro" id="IPR010505">
    <property type="entry name" value="MoaA_twitch"/>
</dbReference>
<dbReference type="InterPro" id="IPR050105">
    <property type="entry name" value="MoCo_biosynth_MoaA/MoaC"/>
</dbReference>
<dbReference type="InterPro" id="IPR007197">
    <property type="entry name" value="rSAM"/>
</dbReference>
<dbReference type="NCBIfam" id="TIGR02666">
    <property type="entry name" value="moaA"/>
    <property type="match status" value="1"/>
</dbReference>
<dbReference type="PANTHER" id="PTHR22960:SF0">
    <property type="entry name" value="MOLYBDENUM COFACTOR BIOSYNTHESIS PROTEIN 1"/>
    <property type="match status" value="1"/>
</dbReference>
<dbReference type="PANTHER" id="PTHR22960">
    <property type="entry name" value="MOLYBDOPTERIN COFACTOR SYNTHESIS PROTEIN A"/>
    <property type="match status" value="1"/>
</dbReference>
<dbReference type="Pfam" id="PF13353">
    <property type="entry name" value="Fer4_12"/>
    <property type="match status" value="1"/>
</dbReference>
<dbReference type="Pfam" id="PF06463">
    <property type="entry name" value="Mob_synth_C"/>
    <property type="match status" value="1"/>
</dbReference>
<dbReference type="Pfam" id="PF04055">
    <property type="entry name" value="Radical_SAM"/>
    <property type="match status" value="1"/>
</dbReference>
<dbReference type="SFLD" id="SFLDG01383">
    <property type="entry name" value="cyclic_pyranopterin_phosphate"/>
    <property type="match status" value="1"/>
</dbReference>
<dbReference type="SFLD" id="SFLDG01072">
    <property type="entry name" value="dehydrogenase_like"/>
    <property type="match status" value="1"/>
</dbReference>
<dbReference type="SMART" id="SM00729">
    <property type="entry name" value="Elp3"/>
    <property type="match status" value="1"/>
</dbReference>
<dbReference type="SUPFAM" id="SSF102114">
    <property type="entry name" value="Radical SAM enzymes"/>
    <property type="match status" value="1"/>
</dbReference>
<dbReference type="PROSITE" id="PS01305">
    <property type="entry name" value="MOAA_NIFB_PQQE"/>
    <property type="match status" value="1"/>
</dbReference>
<dbReference type="PROSITE" id="PS51918">
    <property type="entry name" value="RADICAL_SAM"/>
    <property type="match status" value="1"/>
</dbReference>